<dbReference type="EMBL" id="X89514">
    <property type="protein sequence ID" value="CAA61701.1"/>
    <property type="molecule type" value="Genomic_DNA"/>
</dbReference>
<dbReference type="EMBL" id="U53877">
    <property type="protein sequence ID" value="AAB82369.1"/>
    <property type="molecule type" value="Genomic_DNA"/>
</dbReference>
<dbReference type="EMBL" id="Z73294">
    <property type="protein sequence ID" value="CAA97690.1"/>
    <property type="molecule type" value="Genomic_DNA"/>
</dbReference>
<dbReference type="EMBL" id="BK006945">
    <property type="protein sequence ID" value="DAA80316.1"/>
    <property type="molecule type" value="Genomic_DNA"/>
</dbReference>
<dbReference type="PIR" id="S64959">
    <property type="entry name" value="S64959"/>
</dbReference>
<dbReference type="RefSeq" id="NP_001335796.1">
    <property type="nucleotide sequence ID" value="NM_001348856.1"/>
</dbReference>
<dbReference type="FunCoup" id="Q12312">
    <property type="interactions" value="20"/>
</dbReference>
<dbReference type="PaxDb" id="4932-YLR122C"/>
<dbReference type="EnsemblFungi" id="YLR122C_mRNA">
    <property type="protein sequence ID" value="YLR122C"/>
    <property type="gene ID" value="YLR122C"/>
</dbReference>
<dbReference type="GeneID" id="850813"/>
<dbReference type="AGR" id="SGD:S000004112"/>
<dbReference type="SGD" id="S000004112">
    <property type="gene designation" value="YLR122C"/>
</dbReference>
<dbReference type="HOGENOM" id="CLU_1994395_0_0_1"/>
<dbReference type="InParanoid" id="Q12312"/>
<dbReference type="OrthoDB" id="10299174at2759"/>
<dbReference type="PRO" id="PR:Q12312"/>
<dbReference type="Proteomes" id="UP000002311">
    <property type="component" value="Chromosome XII"/>
</dbReference>
<dbReference type="RNAct" id="Q12312">
    <property type="molecule type" value="protein"/>
</dbReference>
<dbReference type="GO" id="GO:0016020">
    <property type="term" value="C:membrane"/>
    <property type="evidence" value="ECO:0007669"/>
    <property type="project" value="UniProtKB-SubCell"/>
</dbReference>
<proteinExistence type="predicted"/>
<protein>
    <recommendedName>
        <fullName>Uncharacterized protein YLR122C</fullName>
    </recommendedName>
</protein>
<accession>Q12312</accession>
<accession>A0A1S0T0A0</accession>
<sequence>MNRLYQNCMFLYVYTDVCVRLCASIFYIMLEAKFALRIPALRPSYTWGQWRSFIQSSFYGRTFVAFSGPSMKNYITICFLLKSIEVSVDRTALHGTSAEASASNFQRIQTKNLSKYNCNIPACCV</sequence>
<evidence type="ECO:0000255" key="1"/>
<evidence type="ECO:0000305" key="2"/>
<keyword id="KW-0472">Membrane</keyword>
<keyword id="KW-1185">Reference proteome</keyword>
<keyword id="KW-0812">Transmembrane</keyword>
<keyword id="KW-1133">Transmembrane helix</keyword>
<organism>
    <name type="scientific">Saccharomyces cerevisiae (strain ATCC 204508 / S288c)</name>
    <name type="common">Baker's yeast</name>
    <dbReference type="NCBI Taxonomy" id="559292"/>
    <lineage>
        <taxon>Eukaryota</taxon>
        <taxon>Fungi</taxon>
        <taxon>Dikarya</taxon>
        <taxon>Ascomycota</taxon>
        <taxon>Saccharomycotina</taxon>
        <taxon>Saccharomycetes</taxon>
        <taxon>Saccharomycetales</taxon>
        <taxon>Saccharomycetaceae</taxon>
        <taxon>Saccharomyces</taxon>
    </lineage>
</organism>
<gene>
    <name type="ordered locus">YLR122C</name>
    <name type="ORF">L2967</name>
    <name type="ORF">L9233.11</name>
</gene>
<name>YL122_YEAST</name>
<feature type="chain" id="PRO_0000299614" description="Uncharacterized protein YLR122C">
    <location>
        <begin position="1"/>
        <end position="125"/>
    </location>
</feature>
<feature type="transmembrane region" description="Helical" evidence="1">
    <location>
        <begin position="7"/>
        <end position="29"/>
    </location>
</feature>
<comment type="subcellular location">
    <subcellularLocation>
        <location evidence="2">Membrane</location>
        <topology evidence="2">Single-pass membrane protein</topology>
    </subcellularLocation>
</comment>
<reference key="1">
    <citation type="journal article" date="1997" name="Yeast">
        <title>Sequence analysis of a 37.6 kbp cosmid clone from the right arm of Saccharomyces cerevisiae chromosome XII, carrying YAP3, HOG1, SNR6, tRNA-Arg3 and 23 new open reading frames, among which several homologies to proteins involved in cell division control and to mammalian growth factors and other animal proteins are found.</title>
        <authorList>
            <person name="Verhasselt P."/>
            <person name="Volckaert G."/>
        </authorList>
    </citation>
    <scope>NUCLEOTIDE SEQUENCE [GENOMIC DNA]</scope>
    <source>
        <strain>ATCC 90840 / EAY235 / FY23</strain>
    </source>
</reference>
<reference key="2">
    <citation type="journal article" date="1997" name="Nature">
        <title>The nucleotide sequence of Saccharomyces cerevisiae chromosome XII.</title>
        <authorList>
            <person name="Johnston M."/>
            <person name="Hillier L.W."/>
            <person name="Riles L."/>
            <person name="Albermann K."/>
            <person name="Andre B."/>
            <person name="Ansorge W."/>
            <person name="Benes V."/>
            <person name="Brueckner M."/>
            <person name="Delius H."/>
            <person name="Dubois E."/>
            <person name="Duesterhoeft A."/>
            <person name="Entian K.-D."/>
            <person name="Floeth M."/>
            <person name="Goffeau A."/>
            <person name="Hebling U."/>
            <person name="Heumann K."/>
            <person name="Heuss-Neitzel D."/>
            <person name="Hilbert H."/>
            <person name="Hilger F."/>
            <person name="Kleine K."/>
            <person name="Koetter P."/>
            <person name="Louis E.J."/>
            <person name="Messenguy F."/>
            <person name="Mewes H.-W."/>
            <person name="Miosga T."/>
            <person name="Moestl D."/>
            <person name="Mueller-Auer S."/>
            <person name="Nentwich U."/>
            <person name="Obermaier B."/>
            <person name="Piravandi E."/>
            <person name="Pohl T.M."/>
            <person name="Portetelle D."/>
            <person name="Purnelle B."/>
            <person name="Rechmann S."/>
            <person name="Rieger M."/>
            <person name="Rinke M."/>
            <person name="Rose M."/>
            <person name="Scharfe M."/>
            <person name="Scherens B."/>
            <person name="Scholler P."/>
            <person name="Schwager C."/>
            <person name="Schwarz S."/>
            <person name="Underwood A.P."/>
            <person name="Urrestarazu L.A."/>
            <person name="Vandenbol M."/>
            <person name="Verhasselt P."/>
            <person name="Vierendeels F."/>
            <person name="Voet M."/>
            <person name="Volckaert G."/>
            <person name="Voss H."/>
            <person name="Wambutt R."/>
            <person name="Wedler E."/>
            <person name="Wedler H."/>
            <person name="Zimmermann F.K."/>
            <person name="Zollner A."/>
            <person name="Hani J."/>
            <person name="Hoheisel J.D."/>
        </authorList>
    </citation>
    <scope>NUCLEOTIDE SEQUENCE [LARGE SCALE GENOMIC DNA]</scope>
    <source>
        <strain>ATCC 204508 / S288c</strain>
    </source>
</reference>
<reference key="3">
    <citation type="journal article" date="2014" name="G3 (Bethesda)">
        <title>The reference genome sequence of Saccharomyces cerevisiae: Then and now.</title>
        <authorList>
            <person name="Engel S.R."/>
            <person name="Dietrich F.S."/>
            <person name="Fisk D.G."/>
            <person name="Binkley G."/>
            <person name="Balakrishnan R."/>
            <person name="Costanzo M.C."/>
            <person name="Dwight S.S."/>
            <person name="Hitz B.C."/>
            <person name="Karra K."/>
            <person name="Nash R.S."/>
            <person name="Weng S."/>
            <person name="Wong E.D."/>
            <person name="Lloyd P."/>
            <person name="Skrzypek M.S."/>
            <person name="Miyasato S.R."/>
            <person name="Simison M."/>
            <person name="Cherry J.M."/>
        </authorList>
    </citation>
    <scope>GENOME REANNOTATION</scope>
    <source>
        <strain>ATCC 204508 / S288c</strain>
    </source>
</reference>